<keyword id="KW-0066">ATP synthesis</keyword>
<keyword id="KW-1003">Cell membrane</keyword>
<keyword id="KW-0139">CF(1)</keyword>
<keyword id="KW-0375">Hydrogen ion transport</keyword>
<keyword id="KW-0406">Ion transport</keyword>
<keyword id="KW-0472">Membrane</keyword>
<keyword id="KW-0813">Transport</keyword>
<comment type="function">
    <text evidence="1">Produces ATP from ADP in the presence of a proton gradient across the membrane.</text>
</comment>
<comment type="subunit">
    <text>F-type ATPases have 2 components, CF(1) - the catalytic core - and CF(0) - the membrane proton channel. CF(1) has five subunits: alpha(3), beta(3), gamma(1), delta(1), epsilon(1). CF(0) has three main subunits: a, b and c.</text>
</comment>
<comment type="subcellular location">
    <subcellularLocation>
        <location evidence="1">Cell membrane</location>
        <topology evidence="1">Peripheral membrane protein</topology>
    </subcellularLocation>
</comment>
<comment type="similarity">
    <text evidence="1">Belongs to the ATPase epsilon chain family.</text>
</comment>
<evidence type="ECO:0000255" key="1">
    <source>
        <dbReference type="HAMAP-Rule" id="MF_00530"/>
    </source>
</evidence>
<proteinExistence type="inferred from homology"/>
<dbReference type="EMBL" id="CP000088">
    <property type="protein sequence ID" value="AAZ56439.1"/>
    <property type="molecule type" value="Genomic_DNA"/>
</dbReference>
<dbReference type="SMR" id="Q47M83"/>
<dbReference type="STRING" id="269800.Tfu_2406"/>
<dbReference type="KEGG" id="tfu:Tfu_2406"/>
<dbReference type="eggNOG" id="COG0355">
    <property type="taxonomic scope" value="Bacteria"/>
</dbReference>
<dbReference type="HOGENOM" id="CLU_084338_1_3_11"/>
<dbReference type="GO" id="GO:0005886">
    <property type="term" value="C:plasma membrane"/>
    <property type="evidence" value="ECO:0007669"/>
    <property type="project" value="UniProtKB-SubCell"/>
</dbReference>
<dbReference type="GO" id="GO:0045259">
    <property type="term" value="C:proton-transporting ATP synthase complex"/>
    <property type="evidence" value="ECO:0007669"/>
    <property type="project" value="UniProtKB-KW"/>
</dbReference>
<dbReference type="GO" id="GO:0005524">
    <property type="term" value="F:ATP binding"/>
    <property type="evidence" value="ECO:0007669"/>
    <property type="project" value="UniProtKB-UniRule"/>
</dbReference>
<dbReference type="GO" id="GO:0046933">
    <property type="term" value="F:proton-transporting ATP synthase activity, rotational mechanism"/>
    <property type="evidence" value="ECO:0007669"/>
    <property type="project" value="UniProtKB-UniRule"/>
</dbReference>
<dbReference type="CDD" id="cd12152">
    <property type="entry name" value="F1-ATPase_delta"/>
    <property type="match status" value="1"/>
</dbReference>
<dbReference type="Gene3D" id="2.60.15.10">
    <property type="entry name" value="F0F1 ATP synthase delta/epsilon subunit, N-terminal"/>
    <property type="match status" value="1"/>
</dbReference>
<dbReference type="HAMAP" id="MF_00530">
    <property type="entry name" value="ATP_synth_epsil_bac"/>
    <property type="match status" value="1"/>
</dbReference>
<dbReference type="InterPro" id="IPR001469">
    <property type="entry name" value="ATP_synth_F1_dsu/esu"/>
</dbReference>
<dbReference type="InterPro" id="IPR020546">
    <property type="entry name" value="ATP_synth_F1_dsu/esu_N"/>
</dbReference>
<dbReference type="InterPro" id="IPR036771">
    <property type="entry name" value="ATPsynth_dsu/esu_N"/>
</dbReference>
<dbReference type="NCBIfam" id="TIGR01216">
    <property type="entry name" value="ATP_synt_epsi"/>
    <property type="match status" value="1"/>
</dbReference>
<dbReference type="NCBIfam" id="NF009977">
    <property type="entry name" value="PRK13442.1"/>
    <property type="match status" value="1"/>
</dbReference>
<dbReference type="PANTHER" id="PTHR13822">
    <property type="entry name" value="ATP SYNTHASE DELTA/EPSILON CHAIN"/>
    <property type="match status" value="1"/>
</dbReference>
<dbReference type="PANTHER" id="PTHR13822:SF10">
    <property type="entry name" value="ATP SYNTHASE EPSILON CHAIN, CHLOROPLASTIC"/>
    <property type="match status" value="1"/>
</dbReference>
<dbReference type="Pfam" id="PF02823">
    <property type="entry name" value="ATP-synt_DE_N"/>
    <property type="match status" value="1"/>
</dbReference>
<dbReference type="SUPFAM" id="SSF51344">
    <property type="entry name" value="Epsilon subunit of F1F0-ATP synthase N-terminal domain"/>
    <property type="match status" value="1"/>
</dbReference>
<accession>Q47M83</accession>
<gene>
    <name evidence="1" type="primary">atpC</name>
    <name type="ordered locus">Tfu_2406</name>
</gene>
<protein>
    <recommendedName>
        <fullName evidence="1">ATP synthase epsilon chain</fullName>
    </recommendedName>
    <alternativeName>
        <fullName evidence="1">ATP synthase F1 sector epsilon subunit</fullName>
    </alternativeName>
    <alternativeName>
        <fullName evidence="1">F-ATPase epsilon subunit</fullName>
    </alternativeName>
</protein>
<sequence>MAVSKKLFVELVTPERELWAGEGDMVIAKTVEGEIGIQPGHVPVLALLAPGSVVRVLGARESGEVRAAVHGGFMSVTLSDRVSILAEIAELAEEIDVERARAALKSAEREALGDAEMRARVARARGRLRAAKAEEAA</sequence>
<organism>
    <name type="scientific">Thermobifida fusca (strain YX)</name>
    <dbReference type="NCBI Taxonomy" id="269800"/>
    <lineage>
        <taxon>Bacteria</taxon>
        <taxon>Bacillati</taxon>
        <taxon>Actinomycetota</taxon>
        <taxon>Actinomycetes</taxon>
        <taxon>Streptosporangiales</taxon>
        <taxon>Nocardiopsidaceae</taxon>
        <taxon>Thermobifida</taxon>
    </lineage>
</organism>
<name>ATPE_THEFY</name>
<reference key="1">
    <citation type="journal article" date="2007" name="J. Bacteriol.">
        <title>Genome sequence and analysis of the soil cellulolytic actinomycete Thermobifida fusca YX.</title>
        <authorList>
            <person name="Lykidis A."/>
            <person name="Mavromatis K."/>
            <person name="Ivanova N."/>
            <person name="Anderson I."/>
            <person name="Land M."/>
            <person name="DiBartolo G."/>
            <person name="Martinez M."/>
            <person name="Lapidus A."/>
            <person name="Lucas S."/>
            <person name="Copeland A."/>
            <person name="Richardson P."/>
            <person name="Wilson D.B."/>
            <person name="Kyrpides N."/>
        </authorList>
    </citation>
    <scope>NUCLEOTIDE SEQUENCE [LARGE SCALE GENOMIC DNA]</scope>
    <source>
        <strain>YX</strain>
    </source>
</reference>
<feature type="chain" id="PRO_0000265916" description="ATP synthase epsilon chain">
    <location>
        <begin position="1"/>
        <end position="137"/>
    </location>
</feature>